<comment type="function">
    <text evidence="1">ATPase subunit of a proteasome-like degradation complex; this subunit has chaperone activity. The binding of ATP and its subsequent hydrolysis by HslU are essential for unfolding of protein substrates subsequently hydrolyzed by HslV. HslU recognizes the N-terminal part of its protein substrates and unfolds these before they are guided to HslV for hydrolysis.</text>
</comment>
<comment type="subunit">
    <text evidence="1">A double ring-shaped homohexamer of HslV is capped on each side by a ring-shaped HslU homohexamer. The assembly of the HslU/HslV complex is dependent on binding of ATP.</text>
</comment>
<comment type="subcellular location">
    <subcellularLocation>
        <location evidence="1">Cytoplasm</location>
    </subcellularLocation>
</comment>
<comment type="similarity">
    <text evidence="1">Belongs to the ClpX chaperone family. HslU subfamily.</text>
</comment>
<reference key="1">
    <citation type="submission" date="2009-06" db="EMBL/GenBank/DDBJ databases">
        <title>Complete sequence of Desulfovibrio salexigens DSM 2638.</title>
        <authorList>
            <consortium name="US DOE Joint Genome Institute"/>
            <person name="Lucas S."/>
            <person name="Copeland A."/>
            <person name="Lapidus A."/>
            <person name="Glavina del Rio T."/>
            <person name="Tice H."/>
            <person name="Bruce D."/>
            <person name="Goodwin L."/>
            <person name="Pitluck S."/>
            <person name="Munk A.C."/>
            <person name="Brettin T."/>
            <person name="Detter J.C."/>
            <person name="Han C."/>
            <person name="Tapia R."/>
            <person name="Larimer F."/>
            <person name="Land M."/>
            <person name="Hauser L."/>
            <person name="Kyrpides N."/>
            <person name="Anderson I."/>
            <person name="Wall J.D."/>
            <person name="Arkin A.P."/>
            <person name="Dehal P."/>
            <person name="Chivian D."/>
            <person name="Giles B."/>
            <person name="Hazen T.C."/>
        </authorList>
    </citation>
    <scope>NUCLEOTIDE SEQUENCE [LARGE SCALE GENOMIC DNA]</scope>
    <source>
        <strain>ATCC 14822 / DSM 2638 / NCIMB 8403 / VKM B-1763</strain>
    </source>
</reference>
<name>HSLU_MARSD</name>
<feature type="chain" id="PRO_1000204519" description="ATP-dependent protease ATPase subunit HslU">
    <location>
        <begin position="1"/>
        <end position="457"/>
    </location>
</feature>
<feature type="region of interest" description="Disordered" evidence="2">
    <location>
        <begin position="142"/>
        <end position="171"/>
    </location>
</feature>
<feature type="binding site" evidence="1">
    <location>
        <position position="18"/>
    </location>
    <ligand>
        <name>ATP</name>
        <dbReference type="ChEBI" id="CHEBI:30616"/>
    </ligand>
</feature>
<feature type="binding site" evidence="1">
    <location>
        <begin position="60"/>
        <end position="65"/>
    </location>
    <ligand>
        <name>ATP</name>
        <dbReference type="ChEBI" id="CHEBI:30616"/>
    </ligand>
</feature>
<feature type="binding site" evidence="1">
    <location>
        <position position="269"/>
    </location>
    <ligand>
        <name>ATP</name>
        <dbReference type="ChEBI" id="CHEBI:30616"/>
    </ligand>
</feature>
<feature type="binding site" evidence="1">
    <location>
        <position position="335"/>
    </location>
    <ligand>
        <name>ATP</name>
        <dbReference type="ChEBI" id="CHEBI:30616"/>
    </ligand>
</feature>
<feature type="binding site" evidence="1">
    <location>
        <position position="407"/>
    </location>
    <ligand>
        <name>ATP</name>
        <dbReference type="ChEBI" id="CHEBI:30616"/>
    </ligand>
</feature>
<accession>C6C0P1</accession>
<sequence length="457" mass="51817">MSNLTPREIVSELDKFIIGQSDAKRMVAIAMRNRWRRQQLPPELRDEIAPKNIIMMGPTGVGKTEIARRLAKLAGCPFFKVEATKFTEVGYVGRDVESMVRDLMEIGINLVRKEEMEKVKVKAEKHAEDALLDILLPSSKPKQPGMGFFNPAAPEEQEEQPSADQSSTREKFRKMWREGKLDDREVEIEVSVQGGGVEIMSMPGMEDMGMQVNDMIGKMFPNKKKMRKVKIREAYDILIQQESDKLIDMDNVAELARERVEQGGILFLDEIDKIAGNQEGGGSANVSREGVQRDLLPVVEGCVVNTKYGMVKTDHILFISAGAFSYAKPSDLIPELQGRFPLRVELTSLDKDDFYRILTEPQNALTVQYKALLETENLNIDFSREALEEVALNAQKFNEETENIGARRLYTIMEKILSDLSFEAPDRSGDSIVIDKEYVQKQLQDVTEDRDLSRYIL</sequence>
<protein>
    <recommendedName>
        <fullName evidence="1">ATP-dependent protease ATPase subunit HslU</fullName>
    </recommendedName>
    <alternativeName>
        <fullName evidence="1">Unfoldase HslU</fullName>
    </alternativeName>
</protein>
<dbReference type="EMBL" id="CP001649">
    <property type="protein sequence ID" value="ACS80988.1"/>
    <property type="molecule type" value="Genomic_DNA"/>
</dbReference>
<dbReference type="RefSeq" id="WP_015852804.1">
    <property type="nucleotide sequence ID" value="NC_012881.1"/>
</dbReference>
<dbReference type="SMR" id="C6C0P1"/>
<dbReference type="STRING" id="526222.Desal_2936"/>
<dbReference type="KEGG" id="dsa:Desal_2936"/>
<dbReference type="eggNOG" id="COG1220">
    <property type="taxonomic scope" value="Bacteria"/>
</dbReference>
<dbReference type="HOGENOM" id="CLU_033123_0_0_7"/>
<dbReference type="OrthoDB" id="9804062at2"/>
<dbReference type="Proteomes" id="UP000002601">
    <property type="component" value="Chromosome"/>
</dbReference>
<dbReference type="GO" id="GO:0009376">
    <property type="term" value="C:HslUV protease complex"/>
    <property type="evidence" value="ECO:0007669"/>
    <property type="project" value="UniProtKB-UniRule"/>
</dbReference>
<dbReference type="GO" id="GO:0005524">
    <property type="term" value="F:ATP binding"/>
    <property type="evidence" value="ECO:0007669"/>
    <property type="project" value="UniProtKB-UniRule"/>
</dbReference>
<dbReference type="GO" id="GO:0016887">
    <property type="term" value="F:ATP hydrolysis activity"/>
    <property type="evidence" value="ECO:0007669"/>
    <property type="project" value="InterPro"/>
</dbReference>
<dbReference type="GO" id="GO:0008233">
    <property type="term" value="F:peptidase activity"/>
    <property type="evidence" value="ECO:0007669"/>
    <property type="project" value="InterPro"/>
</dbReference>
<dbReference type="GO" id="GO:0036402">
    <property type="term" value="F:proteasome-activating activity"/>
    <property type="evidence" value="ECO:0007669"/>
    <property type="project" value="UniProtKB-UniRule"/>
</dbReference>
<dbReference type="GO" id="GO:0043335">
    <property type="term" value="P:protein unfolding"/>
    <property type="evidence" value="ECO:0007669"/>
    <property type="project" value="UniProtKB-UniRule"/>
</dbReference>
<dbReference type="GO" id="GO:0051603">
    <property type="term" value="P:proteolysis involved in protein catabolic process"/>
    <property type="evidence" value="ECO:0007669"/>
    <property type="project" value="TreeGrafter"/>
</dbReference>
<dbReference type="CDD" id="cd19498">
    <property type="entry name" value="RecA-like_HslU"/>
    <property type="match status" value="1"/>
</dbReference>
<dbReference type="FunFam" id="3.40.50.300:FF:000220">
    <property type="entry name" value="ATP-dependent protease ATPase subunit HslU"/>
    <property type="match status" value="1"/>
</dbReference>
<dbReference type="Gene3D" id="1.10.8.60">
    <property type="match status" value="1"/>
</dbReference>
<dbReference type="Gene3D" id="3.40.50.300">
    <property type="entry name" value="P-loop containing nucleotide triphosphate hydrolases"/>
    <property type="match status" value="2"/>
</dbReference>
<dbReference type="HAMAP" id="MF_00249">
    <property type="entry name" value="HslU"/>
    <property type="match status" value="1"/>
</dbReference>
<dbReference type="InterPro" id="IPR003593">
    <property type="entry name" value="AAA+_ATPase"/>
</dbReference>
<dbReference type="InterPro" id="IPR050052">
    <property type="entry name" value="ATP-dep_Clp_protease_ClpX"/>
</dbReference>
<dbReference type="InterPro" id="IPR003959">
    <property type="entry name" value="ATPase_AAA_core"/>
</dbReference>
<dbReference type="InterPro" id="IPR019489">
    <property type="entry name" value="Clp_ATPase_C"/>
</dbReference>
<dbReference type="InterPro" id="IPR004491">
    <property type="entry name" value="HslU"/>
</dbReference>
<dbReference type="InterPro" id="IPR027417">
    <property type="entry name" value="P-loop_NTPase"/>
</dbReference>
<dbReference type="NCBIfam" id="TIGR00390">
    <property type="entry name" value="hslU"/>
    <property type="match status" value="1"/>
</dbReference>
<dbReference type="NCBIfam" id="NF003544">
    <property type="entry name" value="PRK05201.1"/>
    <property type="match status" value="1"/>
</dbReference>
<dbReference type="PANTHER" id="PTHR48102">
    <property type="entry name" value="ATP-DEPENDENT CLP PROTEASE ATP-BINDING SUBUNIT CLPX-LIKE, MITOCHONDRIAL-RELATED"/>
    <property type="match status" value="1"/>
</dbReference>
<dbReference type="PANTHER" id="PTHR48102:SF3">
    <property type="entry name" value="ATP-DEPENDENT PROTEASE ATPASE SUBUNIT HSLU"/>
    <property type="match status" value="1"/>
</dbReference>
<dbReference type="Pfam" id="PF00004">
    <property type="entry name" value="AAA"/>
    <property type="match status" value="1"/>
</dbReference>
<dbReference type="Pfam" id="PF07724">
    <property type="entry name" value="AAA_2"/>
    <property type="match status" value="1"/>
</dbReference>
<dbReference type="SMART" id="SM00382">
    <property type="entry name" value="AAA"/>
    <property type="match status" value="1"/>
</dbReference>
<dbReference type="SMART" id="SM01086">
    <property type="entry name" value="ClpB_D2-small"/>
    <property type="match status" value="1"/>
</dbReference>
<dbReference type="SUPFAM" id="SSF52540">
    <property type="entry name" value="P-loop containing nucleoside triphosphate hydrolases"/>
    <property type="match status" value="1"/>
</dbReference>
<evidence type="ECO:0000255" key="1">
    <source>
        <dbReference type="HAMAP-Rule" id="MF_00249"/>
    </source>
</evidence>
<evidence type="ECO:0000256" key="2">
    <source>
        <dbReference type="SAM" id="MobiDB-lite"/>
    </source>
</evidence>
<proteinExistence type="inferred from homology"/>
<organism>
    <name type="scientific">Maridesulfovibrio salexigens (strain ATCC 14822 / DSM 2638 / NCIMB 8403 / VKM B-1763)</name>
    <name type="common">Desulfovibrio salexigens</name>
    <dbReference type="NCBI Taxonomy" id="526222"/>
    <lineage>
        <taxon>Bacteria</taxon>
        <taxon>Pseudomonadati</taxon>
        <taxon>Thermodesulfobacteriota</taxon>
        <taxon>Desulfovibrionia</taxon>
        <taxon>Desulfovibrionales</taxon>
        <taxon>Desulfovibrionaceae</taxon>
        <taxon>Maridesulfovibrio</taxon>
    </lineage>
</organism>
<keyword id="KW-0067">ATP-binding</keyword>
<keyword id="KW-0143">Chaperone</keyword>
<keyword id="KW-0963">Cytoplasm</keyword>
<keyword id="KW-0547">Nucleotide-binding</keyword>
<keyword id="KW-1185">Reference proteome</keyword>
<keyword id="KW-0346">Stress response</keyword>
<gene>
    <name evidence="1" type="primary">hslU</name>
    <name type="ordered locus">Desal_2936</name>
</gene>